<accession>P0A6N4</accession>
<accession>P33398</accession>
<accession>Q2M6F7</accession>
<feature type="initiator methionine" description="Removed" evidence="1 8">
    <location>
        <position position="1"/>
    </location>
</feature>
<feature type="chain" id="PRO_0000094245" description="Elongation factor P">
    <location>
        <begin position="2"/>
        <end position="188"/>
    </location>
</feature>
<feature type="modified residue" description="N6-(3,6-diaminohexanoyl)-5-hydroxylysine" evidence="3 4 5">
    <location>
        <position position="34"/>
    </location>
</feature>
<feature type="mutagenesis site" description="No lysylation." evidence="2">
    <original>K</original>
    <variation>A</variation>
    <location>
        <position position="31"/>
    </location>
</feature>
<feature type="mutagenesis site" description="No lysylation. Loss of in vivo EF-P function for cell growth." evidence="2">
    <original>G</original>
    <variation>K</variation>
    <location>
        <position position="33"/>
    </location>
</feature>
<feature type="mutagenesis site" description="No lysylation and loss of EF-P activity. No facilitation of translation of poly-Pro stretches." evidence="2 4 6">
    <original>K</original>
    <variation>A</variation>
    <location>
        <position position="34"/>
    </location>
</feature>
<feature type="strand" evidence="12">
    <location>
        <begin position="4"/>
        <end position="6"/>
    </location>
</feature>
<feature type="strand" evidence="12">
    <location>
        <begin position="14"/>
        <end position="17"/>
    </location>
</feature>
<feature type="strand" evidence="12">
    <location>
        <begin position="20"/>
        <end position="30"/>
    </location>
</feature>
<feature type="strand" evidence="12">
    <location>
        <begin position="38"/>
        <end position="45"/>
    </location>
</feature>
<feature type="helix" evidence="12">
    <location>
        <begin position="46"/>
        <end position="48"/>
    </location>
</feature>
<feature type="strand" evidence="12">
    <location>
        <begin position="51"/>
        <end position="57"/>
    </location>
</feature>
<feature type="strand" evidence="12">
    <location>
        <begin position="61"/>
        <end position="64"/>
    </location>
</feature>
<feature type="strand" evidence="12">
    <location>
        <begin position="67"/>
        <end position="70"/>
    </location>
</feature>
<feature type="strand" evidence="12">
    <location>
        <begin position="73"/>
        <end position="77"/>
    </location>
</feature>
<feature type="strand" evidence="12">
    <location>
        <begin position="82"/>
        <end position="85"/>
    </location>
</feature>
<feature type="turn" evidence="12">
    <location>
        <begin position="87"/>
        <end position="89"/>
    </location>
</feature>
<feature type="strand" evidence="12">
    <location>
        <begin position="92"/>
        <end position="95"/>
    </location>
</feature>
<feature type="helix" evidence="12">
    <location>
        <begin position="97"/>
        <end position="100"/>
    </location>
</feature>
<feature type="turn" evidence="12">
    <location>
        <begin position="102"/>
        <end position="106"/>
    </location>
</feature>
<feature type="strand" evidence="12">
    <location>
        <begin position="109"/>
        <end position="112"/>
    </location>
</feature>
<feature type="strand" evidence="12">
    <location>
        <begin position="114"/>
        <end position="118"/>
    </location>
</feature>
<feature type="strand" evidence="12">
    <location>
        <begin position="121"/>
        <end position="126"/>
    </location>
</feature>
<feature type="strand" evidence="12">
    <location>
        <begin position="152"/>
        <end position="156"/>
    </location>
</feature>
<feature type="strand" evidence="12">
    <location>
        <begin position="161"/>
        <end position="164"/>
    </location>
</feature>
<feature type="strand" evidence="12">
    <location>
        <begin position="173"/>
        <end position="177"/>
    </location>
</feature>
<feature type="turn" evidence="12">
    <location>
        <begin position="178"/>
        <end position="181"/>
    </location>
</feature>
<feature type="strand" evidence="12">
    <location>
        <begin position="182"/>
        <end position="186"/>
    </location>
</feature>
<proteinExistence type="evidence at protein level"/>
<name>EFP_ECOLI</name>
<organism>
    <name type="scientific">Escherichia coli (strain K12)</name>
    <dbReference type="NCBI Taxonomy" id="83333"/>
    <lineage>
        <taxon>Bacteria</taxon>
        <taxon>Pseudomonadati</taxon>
        <taxon>Pseudomonadota</taxon>
        <taxon>Gammaproteobacteria</taxon>
        <taxon>Enterobacterales</taxon>
        <taxon>Enterobacteriaceae</taxon>
        <taxon>Escherichia</taxon>
    </lineage>
</organism>
<gene>
    <name type="primary">efp</name>
    <name type="ordered locus">b4147</name>
    <name type="ordered locus">JW4107</name>
</gene>
<evidence type="ECO:0000269" key="1">
    <source>
    </source>
</evidence>
<evidence type="ECO:0000269" key="2">
    <source>
    </source>
</evidence>
<evidence type="ECO:0000269" key="3">
    <source>
    </source>
</evidence>
<evidence type="ECO:0000269" key="4">
    <source>
    </source>
</evidence>
<evidence type="ECO:0000269" key="5">
    <source>
    </source>
</evidence>
<evidence type="ECO:0000269" key="6">
    <source>
    </source>
</evidence>
<evidence type="ECO:0000269" key="7">
    <source>
    </source>
</evidence>
<evidence type="ECO:0000269" key="8">
    <source>
    </source>
</evidence>
<evidence type="ECO:0000269" key="9">
    <source>
    </source>
</evidence>
<evidence type="ECO:0000305" key="10"/>
<evidence type="ECO:0000305" key="11">
    <source>
    </source>
</evidence>
<evidence type="ECO:0007829" key="12">
    <source>
        <dbReference type="PDB" id="3A5Z"/>
    </source>
</evidence>
<sequence>MATYYSNDFRAGLKIMLDGEPYAVEASEFVKPGKGQAFARVKLRRLLTGTRVEKTFKSTDSAEGADVVDMNLTYLYNDGEFWHFMNNETFEQLSADAKAIGDNAKWLLDQAECIVTLWNGQPISVTPPNFVELEIVDTDPGLKGDTAGTGGKPATLSTGAVVKVPLFVQIGEVIKVDTRSGEYVSRVK</sequence>
<comment type="function">
    <text evidence="6 7">Involved in peptide bond synthesis. Alleviates ribosome stalling that occurs when 3 or more consecutive Pro residues or the sequence PPG is present in a protein, possibly by augmenting the peptidyl transferase activity of the ribosome. Beta-lysylation at Lys-34 is required for alleviation. The Pro codons and their context do not affect activity; only consecutive Pro residues (not another amino acid) are affected by EF-P. Has stimulatory effects on peptide bond formation between ribosome-bound initiator tRNA(fMet) and puromycin, and N-acetyl-Phe tRNA(Phe)-primed poly(U)-directed poly(Phe) synthesis.</text>
</comment>
<comment type="pathway">
    <text>Protein biosynthesis; polypeptide chain elongation.</text>
</comment>
<comment type="subunit">
    <text evidence="2">Binds 30S, 50S and 70S ribosomes, possibly near the A site, note that T.thermophilus structures show binding between the P and E sites (PDB 3HUW and 3HUY). Proportionally less EF-P binds to larger polysomes, suggesting it has a role early in translation. It is present in 1 copy per 10 ribosomes.</text>
</comment>
<comment type="subcellular location">
    <subcellularLocation>
        <location>Cytoplasm</location>
    </subcellularLocation>
</comment>
<comment type="PTM">
    <text evidence="3 4 5">Is beta-lysylated on the epsilon-amino group of Lys-34 by the combined action of EpmA and EpmB, and then hydroxylated on the C5 position of the same residue by EpmC. Lysylation is critical for the stimulatory effect of EF-P on peptide-bond formation. The lysylation moiety would extend toward the peptidyltransferase center and stabilize the terminal 3-CCA end of the tRNA. The hydroxylation of the C5 position on Lys-34 would allow additional potential stabilizing hydrogen-bond interactions with the P-tRNA (PubMed:20729861, PubMed:21841797, PubMed:22128152, PubMed:22706199).</text>
</comment>
<comment type="mass spectrometry">
    <text>With N6-(3,6-diaminohexanoyl)-5-hydroxy-Lys-34.</text>
</comment>
<comment type="disruption phenotype">
    <text evidence="2 6 9">Disruption of this gene leads to lethality (PubMed:9405429) or to a very slow growth phenotype (PubMed:20729861). Required for the expression of poly-Pro-containing proteins.</text>
</comment>
<comment type="similarity">
    <text evidence="10">Belongs to the elongation factor P family.</text>
</comment>
<comment type="caution">
    <text evidence="11">The modification on Lys-34 was initially thought to be a spermidine residue.</text>
</comment>
<reference key="1">
    <citation type="journal article" date="1991" name="Nucleic Acids Res.">
        <title>Cloning, sequencing and overexpression of the gene for prokaryotic factor EF-P involved in peptide bond synthesis.</title>
        <authorList>
            <person name="Aoki H."/>
            <person name="Adams S.-L."/>
            <person name="Chung D.-G."/>
            <person name="Yaguchi M."/>
            <person name="Chuang S.-E."/>
            <person name="Ganoza M.C."/>
        </authorList>
    </citation>
    <scope>NUCLEOTIDE SEQUENCE [GENOMIC DNA]</scope>
    <scope>PROTEIN SEQUENCE OF 2-33; 71-80 AND 86-117</scope>
</reference>
<reference key="2">
    <citation type="journal article" date="1995" name="Nucleic Acids Res.">
        <title>Analysis of the Escherichia coli genome VI: DNA sequence of the region from 92.8 through 100 minutes.</title>
        <authorList>
            <person name="Burland V.D."/>
            <person name="Plunkett G. III"/>
            <person name="Sofia H.J."/>
            <person name="Daniels D.L."/>
            <person name="Blattner F.R."/>
        </authorList>
    </citation>
    <scope>NUCLEOTIDE SEQUENCE [LARGE SCALE GENOMIC DNA]</scope>
    <source>
        <strain>K12 / MG1655 / ATCC 47076</strain>
    </source>
</reference>
<reference key="3">
    <citation type="journal article" date="1997" name="Science">
        <title>The complete genome sequence of Escherichia coli K-12.</title>
        <authorList>
            <person name="Blattner F.R."/>
            <person name="Plunkett G. III"/>
            <person name="Bloch C.A."/>
            <person name="Perna N.T."/>
            <person name="Burland V."/>
            <person name="Riley M."/>
            <person name="Collado-Vides J."/>
            <person name="Glasner J.D."/>
            <person name="Rode C.K."/>
            <person name="Mayhew G.F."/>
            <person name="Gregor J."/>
            <person name="Davis N.W."/>
            <person name="Kirkpatrick H.A."/>
            <person name="Goeden M.A."/>
            <person name="Rose D.J."/>
            <person name="Mau B."/>
            <person name="Shao Y."/>
        </authorList>
    </citation>
    <scope>NUCLEOTIDE SEQUENCE [LARGE SCALE GENOMIC DNA]</scope>
    <source>
        <strain>K12 / MG1655 / ATCC 47076</strain>
    </source>
</reference>
<reference key="4">
    <citation type="journal article" date="2006" name="Mol. Syst. Biol.">
        <title>Highly accurate genome sequences of Escherichia coli K-12 strains MG1655 and W3110.</title>
        <authorList>
            <person name="Hayashi K."/>
            <person name="Morooka N."/>
            <person name="Yamamoto Y."/>
            <person name="Fujita K."/>
            <person name="Isono K."/>
            <person name="Choi S."/>
            <person name="Ohtsubo E."/>
            <person name="Baba T."/>
            <person name="Wanner B.L."/>
            <person name="Mori H."/>
            <person name="Horiuchi T."/>
        </authorList>
    </citation>
    <scope>NUCLEOTIDE SEQUENCE [LARGE SCALE GENOMIC DNA]</scope>
    <source>
        <strain>K12 / W3110 / ATCC 27325 / DSM 5911</strain>
    </source>
</reference>
<reference key="5">
    <citation type="journal article" date="1997" name="Electrophoresis">
        <title>Comparing the predicted and observed properties of proteins encoded in the genome of Escherichia coli K-12.</title>
        <authorList>
            <person name="Link A.J."/>
            <person name="Robison K."/>
            <person name="Church G.M."/>
        </authorList>
    </citation>
    <scope>PROTEIN SEQUENCE OF 2-13</scope>
    <source>
        <strain>K12 / EMG2</strain>
    </source>
</reference>
<reference key="6">
    <citation type="journal article" date="1997" name="Biochimie">
        <title>Molecular characterization of the prokaryotic efp gene product involved in a peptidyltransferase reaction.</title>
        <authorList>
            <person name="Aoki H."/>
            <person name="Adams S.-L."/>
            <person name="Turner M.A."/>
            <person name="Ganoza M.C."/>
        </authorList>
    </citation>
    <scope>CHARACTERIZATION</scope>
</reference>
<reference key="7">
    <citation type="journal article" date="1997" name="J. Biol. Chem.">
        <title>The gene encoding the elongation factor P protein is essential for viability and is required for protein synthesis.</title>
        <authorList>
            <person name="Aoki H."/>
            <person name="Dekany K."/>
            <person name="Adams S.L."/>
            <person name="Ganoza M.C."/>
        </authorList>
    </citation>
    <scope>DISRUPTION PHENOTYPE</scope>
</reference>
<reference key="8">
    <citation type="journal article" date="1980" name="Can. J. Biochem.">
        <title>Identification and quantitation of elongation factor EF-P in Escherichia coli cell-free extracts.</title>
        <authorList>
            <person name="An G."/>
            <person name="Glick B.R."/>
            <person name="Friesen J.D."/>
            <person name="Ganoza M.C."/>
        </authorList>
    </citation>
    <scope>COPY NUMBER</scope>
</reference>
<reference key="9">
    <citation type="journal article" date="2008" name="FEBS J.">
        <title>Interactions of elongation factor EF-P with the Escherichia coli ribosome.</title>
        <authorList>
            <person name="Aoki H."/>
            <person name="Xu J."/>
            <person name="Emili A."/>
            <person name="Chosay J.G."/>
            <person name="Golshani A."/>
            <person name="Ganoza M.C."/>
        </authorList>
    </citation>
    <scope>PTM</scope>
    <scope>RIBOSOME-BINDING</scope>
</reference>
<reference key="10">
    <citation type="journal article" date="2011" name="Nat. Chem. Biol.">
        <title>The tRNA synthetase paralog PoxA modifies elongation factor-P with (R)-beta-lysine.</title>
        <authorList>
            <person name="Roy H."/>
            <person name="Zou S.B."/>
            <person name="Bullwinkle T.J."/>
            <person name="Wolfe B.S."/>
            <person name="Gilreath M.S."/>
            <person name="Forsyth C.J."/>
            <person name="Navarre W.W."/>
            <person name="Ibba M."/>
        </authorList>
    </citation>
    <scope>BETA-LYSYLATION AT LYS-34 BY EPMA</scope>
    <scope>HYDROXYLATION AT LYS-34</scope>
    <source>
        <strain>K12</strain>
    </source>
</reference>
<reference key="11">
    <citation type="journal article" date="2012" name="J. Biol. Chem.">
        <title>Post-translational modification by beta-lysylation is required for activity of Escherichia coli elongation factor P (EF-P).</title>
        <authorList>
            <person name="Park J.H."/>
            <person name="Johansson H.E."/>
            <person name="Aoki H."/>
            <person name="Huang B.X."/>
            <person name="Kim H.Y."/>
            <person name="Ganoza M.C."/>
            <person name="Park M.H."/>
        </authorList>
    </citation>
    <scope>BETA-LYSYLATION AT LYS-34 BY EPMA AND EPMB</scope>
    <scope>HYDROXYLATION AT LYS-34</scope>
    <scope>MUTAGENESIS OF LYS-34</scope>
    <source>
        <strain>K12 / MG1655 / ATCC 47076</strain>
        <strain>MRE-600</strain>
    </source>
</reference>
<reference key="12">
    <citation type="journal article" date="2012" name="Nat. Chem. Biol.">
        <title>Lys34 of translation elongation factor EF-P is hydroxylated by YfcM.</title>
        <authorList>
            <person name="Peil L."/>
            <person name="Starosta A.L."/>
            <person name="Virumae K."/>
            <person name="Atkinson G.C."/>
            <person name="Tenson T."/>
            <person name="Remme J."/>
            <person name="Wilson D.N."/>
        </authorList>
    </citation>
    <scope>HYDROXYLATION AT LYS-34 BY EPMC</scope>
    <scope>MASS SPECTROMETRY</scope>
    <source>
        <strain>K12 / AT713</strain>
        <strain>K12 / BW25113</strain>
        <strain>K12 / MC4100 / ATCC 35695 / DSM 6574</strain>
        <strain>MRE-600</strain>
    </source>
</reference>
<reference key="13">
    <citation type="journal article" date="2013" name="Science">
        <title>Translation elongation factor EF-P alleviates ribosome stalling at polyproline stretches.</title>
        <authorList>
            <person name="Ude S."/>
            <person name="Lassak J."/>
            <person name="Starosta A.L."/>
            <person name="Kraxenberger T."/>
            <person name="Wilson D.N."/>
            <person name="Jung K."/>
        </authorList>
    </citation>
    <scope>FUNCTION IN POLY-PRO TRANSLATION</scope>
    <scope>DISRUPTION PHENOTYPE</scope>
    <scope>MUTAGENESIS OF LYS-34</scope>
    <source>
        <strain>K12 / BW25113</strain>
        <strain>K12 / MG1655 / ATCC 47076</strain>
    </source>
</reference>
<reference key="14">
    <citation type="journal article" date="2013" name="Science">
        <title>EF-P is essential for rapid synthesis of proteins containing consecutive proline residues.</title>
        <authorList>
            <person name="Doerfel L.K."/>
            <person name="Wohlgemuth I."/>
            <person name="Kothe C."/>
            <person name="Peske F."/>
            <person name="Urlaub H."/>
            <person name="Rodnina M.V."/>
        </authorList>
    </citation>
    <scope>FUNCTION IN TRANSLATION</scope>
    <scope>PTM</scope>
    <source>
        <strain>B / BL21-DE3</strain>
        <strain>MRE-600</strain>
    </source>
</reference>
<reference key="15">
    <citation type="journal article" date="2010" name="Nat. Struct. Mol. Biol.">
        <title>A paralog of lysyl-tRNA synthetase aminoacylates a conserved lysine residue in translation elongation factor P.</title>
        <authorList>
            <person name="Yanagisawa T."/>
            <person name="Sumida T."/>
            <person name="Ishii R."/>
            <person name="Takemoto C."/>
            <person name="Yokoyama S."/>
        </authorList>
    </citation>
    <scope>X-RAY CRYSTALLOGRAPHY (2.50 ANGSTROMS) IN COMPLEX WITH LYSYL-ADENYLATE ANALOG AND EMPA</scope>
    <scope>DISRUPTION PHENOTYPE</scope>
    <scope>MUTAGENESIS OF LYS-31; GLY-33 AND LYS-34</scope>
    <source>
        <strain>K12 / BW25113</strain>
        <strain>K12 / MC4100 / ATCC 35695 / DSM 6574</strain>
    </source>
</reference>
<protein>
    <recommendedName>
        <fullName>Elongation factor P</fullName>
        <shortName>EF-P</shortName>
    </recommendedName>
</protein>
<keyword id="KW-0002">3D-structure</keyword>
<keyword id="KW-0963">Cytoplasm</keyword>
<keyword id="KW-0903">Direct protein sequencing</keyword>
<keyword id="KW-0251">Elongation factor</keyword>
<keyword id="KW-0379">Hydroxylation</keyword>
<keyword id="KW-0648">Protein biosynthesis</keyword>
<keyword id="KW-1185">Reference proteome</keyword>
<dbReference type="EMBL" id="X61676">
    <property type="protein sequence ID" value="CAA43851.1"/>
    <property type="molecule type" value="Genomic_DNA"/>
</dbReference>
<dbReference type="EMBL" id="U14003">
    <property type="protein sequence ID" value="AAA97046.1"/>
    <property type="molecule type" value="Genomic_DNA"/>
</dbReference>
<dbReference type="EMBL" id="U00096">
    <property type="protein sequence ID" value="AAC77107.1"/>
    <property type="molecule type" value="Genomic_DNA"/>
</dbReference>
<dbReference type="EMBL" id="AP009048">
    <property type="protein sequence ID" value="BAE78149.1"/>
    <property type="molecule type" value="Genomic_DNA"/>
</dbReference>
<dbReference type="PIR" id="S34443">
    <property type="entry name" value="S34443"/>
</dbReference>
<dbReference type="RefSeq" id="NP_418571.1">
    <property type="nucleotide sequence ID" value="NC_000913.3"/>
</dbReference>
<dbReference type="RefSeq" id="WP_000257278.1">
    <property type="nucleotide sequence ID" value="NZ_STEB01000014.1"/>
</dbReference>
<dbReference type="PDB" id="3A5Z">
    <property type="method" value="X-ray"/>
    <property type="resolution" value="2.50 A"/>
    <property type="chains" value="B/D/F/H=1-188"/>
</dbReference>
<dbReference type="PDB" id="6ENJ">
    <property type="method" value="EM"/>
    <property type="resolution" value="3.70 A"/>
    <property type="chains" value="w=1-188"/>
</dbReference>
<dbReference type="PDB" id="6ENU">
    <property type="method" value="EM"/>
    <property type="resolution" value="3.10 A"/>
    <property type="chains" value="w=1-188"/>
</dbReference>
<dbReference type="PDBsum" id="3A5Z"/>
<dbReference type="PDBsum" id="6ENJ"/>
<dbReference type="PDBsum" id="6ENU"/>
<dbReference type="EMDB" id="EMD-3899"/>
<dbReference type="EMDB" id="EMD-3903"/>
<dbReference type="SMR" id="P0A6N4"/>
<dbReference type="BioGRID" id="4260776">
    <property type="interactions" value="791"/>
</dbReference>
<dbReference type="DIP" id="DIP-31834N"/>
<dbReference type="FunCoup" id="P0A6N4">
    <property type="interactions" value="753"/>
</dbReference>
<dbReference type="IntAct" id="P0A6N4">
    <property type="interactions" value="51"/>
</dbReference>
<dbReference type="STRING" id="511145.b4147"/>
<dbReference type="jPOST" id="P0A6N4"/>
<dbReference type="PaxDb" id="511145-b4147"/>
<dbReference type="EnsemblBacteria" id="AAC77107">
    <property type="protein sequence ID" value="AAC77107"/>
    <property type="gene ID" value="b4147"/>
</dbReference>
<dbReference type="GeneID" id="93777677"/>
<dbReference type="GeneID" id="948661"/>
<dbReference type="KEGG" id="ecj:JW4107"/>
<dbReference type="KEGG" id="eco:b4147"/>
<dbReference type="KEGG" id="ecoc:C3026_22410"/>
<dbReference type="PATRIC" id="fig|1411691.4.peg.2553"/>
<dbReference type="EchoBASE" id="EB2023"/>
<dbReference type="eggNOG" id="COG0231">
    <property type="taxonomic scope" value="Bacteria"/>
</dbReference>
<dbReference type="HOGENOM" id="CLU_074944_0_0_6"/>
<dbReference type="InParanoid" id="P0A6N4"/>
<dbReference type="OMA" id="WSVVEFQ"/>
<dbReference type="OrthoDB" id="9801844at2"/>
<dbReference type="PhylomeDB" id="P0A6N4"/>
<dbReference type="BioCyc" id="EcoCyc:EG12099-MONOMER"/>
<dbReference type="BioCyc" id="MetaCyc:EG12099-MONOMER"/>
<dbReference type="UniPathway" id="UPA00345"/>
<dbReference type="EvolutionaryTrace" id="P0A6N4"/>
<dbReference type="PRO" id="PR:P0A6N4"/>
<dbReference type="Proteomes" id="UP000000625">
    <property type="component" value="Chromosome"/>
</dbReference>
<dbReference type="GO" id="GO:0005737">
    <property type="term" value="C:cytoplasm"/>
    <property type="evidence" value="ECO:0000314"/>
    <property type="project" value="EcoCyc"/>
</dbReference>
<dbReference type="GO" id="GO:0005829">
    <property type="term" value="C:cytosol"/>
    <property type="evidence" value="ECO:0000314"/>
    <property type="project" value="EcoCyc"/>
</dbReference>
<dbReference type="GO" id="GO:0043022">
    <property type="term" value="F:ribosome binding"/>
    <property type="evidence" value="ECO:0000314"/>
    <property type="project" value="EcoCyc"/>
</dbReference>
<dbReference type="GO" id="GO:0003746">
    <property type="term" value="F:translation elongation factor activity"/>
    <property type="evidence" value="ECO:0000314"/>
    <property type="project" value="EcoCyc"/>
</dbReference>
<dbReference type="GO" id="GO:2001125">
    <property type="term" value="P:negative regulation of translational frameshifting"/>
    <property type="evidence" value="ECO:0000315"/>
    <property type="project" value="EcoCyc"/>
</dbReference>
<dbReference type="GO" id="GO:0043043">
    <property type="term" value="P:peptide biosynthetic process"/>
    <property type="evidence" value="ECO:0007669"/>
    <property type="project" value="InterPro"/>
</dbReference>
<dbReference type="GO" id="GO:0072344">
    <property type="term" value="P:rescue of stalled ribosome"/>
    <property type="evidence" value="ECO:0000315"/>
    <property type="project" value="EcoCyc"/>
</dbReference>
<dbReference type="GO" id="GO:0006414">
    <property type="term" value="P:translational elongation"/>
    <property type="evidence" value="ECO:0000314"/>
    <property type="project" value="EcoCyc"/>
</dbReference>
<dbReference type="CDD" id="cd04470">
    <property type="entry name" value="S1_EF-P_repeat_1"/>
    <property type="match status" value="1"/>
</dbReference>
<dbReference type="CDD" id="cd05794">
    <property type="entry name" value="S1_EF-P_repeat_2"/>
    <property type="match status" value="1"/>
</dbReference>
<dbReference type="FunFam" id="2.30.30.30:FF:000003">
    <property type="entry name" value="Elongation factor P"/>
    <property type="match status" value="1"/>
</dbReference>
<dbReference type="FunFam" id="2.40.50.140:FF:000004">
    <property type="entry name" value="Elongation factor P"/>
    <property type="match status" value="1"/>
</dbReference>
<dbReference type="FunFam" id="2.40.50.140:FF:000009">
    <property type="entry name" value="Elongation factor P"/>
    <property type="match status" value="1"/>
</dbReference>
<dbReference type="Gene3D" id="2.30.30.30">
    <property type="match status" value="1"/>
</dbReference>
<dbReference type="Gene3D" id="2.40.50.140">
    <property type="entry name" value="Nucleic acid-binding proteins"/>
    <property type="match status" value="2"/>
</dbReference>
<dbReference type="HAMAP" id="MF_00141">
    <property type="entry name" value="EF_P"/>
    <property type="match status" value="1"/>
</dbReference>
<dbReference type="InterPro" id="IPR015365">
    <property type="entry name" value="Elong-fact-P_C"/>
</dbReference>
<dbReference type="InterPro" id="IPR012340">
    <property type="entry name" value="NA-bd_OB-fold"/>
</dbReference>
<dbReference type="InterPro" id="IPR014722">
    <property type="entry name" value="Rib_uL2_dom2"/>
</dbReference>
<dbReference type="InterPro" id="IPR020599">
    <property type="entry name" value="Transl_elong_fac_P/YeiP"/>
</dbReference>
<dbReference type="InterPro" id="IPR013185">
    <property type="entry name" value="Transl_elong_KOW-like"/>
</dbReference>
<dbReference type="InterPro" id="IPR001059">
    <property type="entry name" value="Transl_elong_P/YeiP_cen"/>
</dbReference>
<dbReference type="InterPro" id="IPR013852">
    <property type="entry name" value="Transl_elong_P/YeiP_CS"/>
</dbReference>
<dbReference type="InterPro" id="IPR011768">
    <property type="entry name" value="Transl_elongation_fac_P"/>
</dbReference>
<dbReference type="InterPro" id="IPR008991">
    <property type="entry name" value="Translation_prot_SH3-like_sf"/>
</dbReference>
<dbReference type="NCBIfam" id="TIGR00038">
    <property type="entry name" value="efp"/>
    <property type="match status" value="1"/>
</dbReference>
<dbReference type="NCBIfam" id="NF001810">
    <property type="entry name" value="PRK00529.1"/>
    <property type="match status" value="1"/>
</dbReference>
<dbReference type="PANTHER" id="PTHR30053">
    <property type="entry name" value="ELONGATION FACTOR P"/>
    <property type="match status" value="1"/>
</dbReference>
<dbReference type="PANTHER" id="PTHR30053:SF12">
    <property type="entry name" value="ELONGATION FACTOR P (EF-P) FAMILY PROTEIN"/>
    <property type="match status" value="1"/>
</dbReference>
<dbReference type="Pfam" id="PF01132">
    <property type="entry name" value="EFP"/>
    <property type="match status" value="1"/>
</dbReference>
<dbReference type="Pfam" id="PF08207">
    <property type="entry name" value="EFP_N"/>
    <property type="match status" value="1"/>
</dbReference>
<dbReference type="Pfam" id="PF09285">
    <property type="entry name" value="Elong-fact-P_C"/>
    <property type="match status" value="1"/>
</dbReference>
<dbReference type="PIRSF" id="PIRSF005901">
    <property type="entry name" value="EF-P"/>
    <property type="match status" value="1"/>
</dbReference>
<dbReference type="SMART" id="SM01185">
    <property type="entry name" value="EFP"/>
    <property type="match status" value="1"/>
</dbReference>
<dbReference type="SMART" id="SM00841">
    <property type="entry name" value="Elong-fact-P_C"/>
    <property type="match status" value="1"/>
</dbReference>
<dbReference type="SUPFAM" id="SSF50249">
    <property type="entry name" value="Nucleic acid-binding proteins"/>
    <property type="match status" value="2"/>
</dbReference>
<dbReference type="SUPFAM" id="SSF50104">
    <property type="entry name" value="Translation proteins SH3-like domain"/>
    <property type="match status" value="1"/>
</dbReference>
<dbReference type="PROSITE" id="PS01275">
    <property type="entry name" value="EFP"/>
    <property type="match status" value="1"/>
</dbReference>